<name>MED8_ASPOR</name>
<feature type="chain" id="PRO_0000304537" description="Mediator of RNA polymerase II transcription subunit 8">
    <location>
        <begin position="1"/>
        <end position="244"/>
    </location>
</feature>
<feature type="coiled-coil region" evidence="2">
    <location>
        <begin position="6"/>
        <end position="30"/>
    </location>
</feature>
<sequence length="244" mass="26985">MATPTQEQLKTLEQSRQRLVQLTRSLASLITSLNQSDPLPSWSSLQSQASIISNNLLSVSDHLSDNRDLLTSLVAYPGPDYPGRTQANTLEQLLRTKLDPRVEDWVARGRKAGASALEDKSGLAEAELAELWDWAPVEANQEARRRNWGGNFTLEEREMGVQNVVTGLARVLEDEGSESEDEEEGEEDEMEIVGVRRQSAGAGFEFDIAPASAAQHQQQKFVEPAVPLEDILRFMTTGAEPGKR</sequence>
<evidence type="ECO:0000250" key="1"/>
<evidence type="ECO:0000255" key="2"/>
<evidence type="ECO:0000305" key="3"/>
<comment type="function">
    <text evidence="1">Component of the Mediator complex, a coactivator involved in the regulated transcription of nearly all RNA polymerase II-dependent genes. Mediator functions as a bridge to convey information from gene-specific regulatory proteins to the basal RNA polymerase II transcription machinery. Mediator is recruited to promoters by direct interactions with regulatory proteins and serves as a scaffold for the assembly of a functional preinitiation complex with RNA polymerase II and the general transcription factors (By similarity).</text>
</comment>
<comment type="subunit">
    <text evidence="1">Component of the Mediator complex.</text>
</comment>
<comment type="subcellular location">
    <subcellularLocation>
        <location evidence="3">Nucleus</location>
    </subcellularLocation>
</comment>
<comment type="similarity">
    <text evidence="3">Belongs to the Mediator complex subunit 8 family.</text>
</comment>
<protein>
    <recommendedName>
        <fullName>Mediator of RNA polymerase II transcription subunit 8</fullName>
    </recommendedName>
    <alternativeName>
        <fullName>Mediator complex subunit 8</fullName>
    </alternativeName>
</protein>
<proteinExistence type="inferred from homology"/>
<organism>
    <name type="scientific">Aspergillus oryzae (strain ATCC 42149 / RIB 40)</name>
    <name type="common">Yellow koji mold</name>
    <dbReference type="NCBI Taxonomy" id="510516"/>
    <lineage>
        <taxon>Eukaryota</taxon>
        <taxon>Fungi</taxon>
        <taxon>Dikarya</taxon>
        <taxon>Ascomycota</taxon>
        <taxon>Pezizomycotina</taxon>
        <taxon>Eurotiomycetes</taxon>
        <taxon>Eurotiomycetidae</taxon>
        <taxon>Eurotiales</taxon>
        <taxon>Aspergillaceae</taxon>
        <taxon>Aspergillus</taxon>
        <taxon>Aspergillus subgen. Circumdati</taxon>
    </lineage>
</organism>
<keyword id="KW-0010">Activator</keyword>
<keyword id="KW-0175">Coiled coil</keyword>
<keyword id="KW-0539">Nucleus</keyword>
<keyword id="KW-1185">Reference proteome</keyword>
<keyword id="KW-0804">Transcription</keyword>
<keyword id="KW-0805">Transcription regulation</keyword>
<reference key="1">
    <citation type="journal article" date="2005" name="Nature">
        <title>Genome sequencing and analysis of Aspergillus oryzae.</title>
        <authorList>
            <person name="Machida M."/>
            <person name="Asai K."/>
            <person name="Sano M."/>
            <person name="Tanaka T."/>
            <person name="Kumagai T."/>
            <person name="Terai G."/>
            <person name="Kusumoto K."/>
            <person name="Arima T."/>
            <person name="Akita O."/>
            <person name="Kashiwagi Y."/>
            <person name="Abe K."/>
            <person name="Gomi K."/>
            <person name="Horiuchi H."/>
            <person name="Kitamoto K."/>
            <person name="Kobayashi T."/>
            <person name="Takeuchi M."/>
            <person name="Denning D.W."/>
            <person name="Galagan J.E."/>
            <person name="Nierman W.C."/>
            <person name="Yu J."/>
            <person name="Archer D.B."/>
            <person name="Bennett J.W."/>
            <person name="Bhatnagar D."/>
            <person name="Cleveland T.E."/>
            <person name="Fedorova N.D."/>
            <person name="Gotoh O."/>
            <person name="Horikawa H."/>
            <person name="Hosoyama A."/>
            <person name="Ichinomiya M."/>
            <person name="Igarashi R."/>
            <person name="Iwashita K."/>
            <person name="Juvvadi P.R."/>
            <person name="Kato M."/>
            <person name="Kato Y."/>
            <person name="Kin T."/>
            <person name="Kokubun A."/>
            <person name="Maeda H."/>
            <person name="Maeyama N."/>
            <person name="Maruyama J."/>
            <person name="Nagasaki H."/>
            <person name="Nakajima T."/>
            <person name="Oda K."/>
            <person name="Okada K."/>
            <person name="Paulsen I."/>
            <person name="Sakamoto K."/>
            <person name="Sawano T."/>
            <person name="Takahashi M."/>
            <person name="Takase K."/>
            <person name="Terabayashi Y."/>
            <person name="Wortman J.R."/>
            <person name="Yamada O."/>
            <person name="Yamagata Y."/>
            <person name="Anazawa H."/>
            <person name="Hata Y."/>
            <person name="Koide Y."/>
            <person name="Komori T."/>
            <person name="Koyama Y."/>
            <person name="Minetoki T."/>
            <person name="Suharnan S."/>
            <person name="Tanaka A."/>
            <person name="Isono K."/>
            <person name="Kuhara S."/>
            <person name="Ogasawara N."/>
            <person name="Kikuchi H."/>
        </authorList>
    </citation>
    <scope>NUCLEOTIDE SEQUENCE [LARGE SCALE GENOMIC DNA]</scope>
    <source>
        <strain>ATCC 42149 / RIB 40</strain>
    </source>
</reference>
<dbReference type="EMBL" id="BA000051">
    <property type="protein sequence ID" value="BAE59234.1"/>
    <property type="molecule type" value="Genomic_DNA"/>
</dbReference>
<dbReference type="RefSeq" id="XP_001821236.1">
    <property type="nucleotide sequence ID" value="XM_001821184.2"/>
</dbReference>
<dbReference type="SMR" id="Q2UGT1"/>
<dbReference type="EnsemblFungi" id="BAE59234">
    <property type="protein sequence ID" value="BAE59234"/>
    <property type="gene ID" value="AO090023000723"/>
</dbReference>
<dbReference type="GeneID" id="5993238"/>
<dbReference type="KEGG" id="aor:AO090023000723"/>
<dbReference type="VEuPathDB" id="FungiDB:AO090023000723"/>
<dbReference type="HOGENOM" id="CLU_074399_1_0_1"/>
<dbReference type="OMA" id="WAPIEAN"/>
<dbReference type="OrthoDB" id="100089at5052"/>
<dbReference type="Proteomes" id="UP000006564">
    <property type="component" value="Chromosome 3"/>
</dbReference>
<dbReference type="GO" id="GO:0070847">
    <property type="term" value="C:core mediator complex"/>
    <property type="evidence" value="ECO:0007669"/>
    <property type="project" value="TreeGrafter"/>
</dbReference>
<dbReference type="GO" id="GO:0016592">
    <property type="term" value="C:mediator complex"/>
    <property type="evidence" value="ECO:0007669"/>
    <property type="project" value="InterPro"/>
</dbReference>
<dbReference type="GO" id="GO:0000978">
    <property type="term" value="F:RNA polymerase II cis-regulatory region sequence-specific DNA binding"/>
    <property type="evidence" value="ECO:0007669"/>
    <property type="project" value="TreeGrafter"/>
</dbReference>
<dbReference type="GO" id="GO:0003712">
    <property type="term" value="F:transcription coregulator activity"/>
    <property type="evidence" value="ECO:0007669"/>
    <property type="project" value="InterPro"/>
</dbReference>
<dbReference type="GO" id="GO:0006357">
    <property type="term" value="P:regulation of transcription by RNA polymerase II"/>
    <property type="evidence" value="ECO:0007669"/>
    <property type="project" value="InterPro"/>
</dbReference>
<dbReference type="FunFam" id="1.20.58.1710:FF:000002">
    <property type="entry name" value="Mediator of RNA polymerase II transcription subunit 8"/>
    <property type="match status" value="1"/>
</dbReference>
<dbReference type="Gene3D" id="1.20.58.1710">
    <property type="match status" value="1"/>
</dbReference>
<dbReference type="Gene3D" id="6.10.250.2610">
    <property type="match status" value="1"/>
</dbReference>
<dbReference type="InterPro" id="IPR019364">
    <property type="entry name" value="Mediatior_Med8_fun/met"/>
</dbReference>
<dbReference type="PANTHER" id="PTHR13074">
    <property type="entry name" value="MEDIATOR OF RNA POLYMERASE II TRANSCRIPTION SUBUNIT 8"/>
    <property type="match status" value="1"/>
</dbReference>
<dbReference type="PANTHER" id="PTHR13074:SF9">
    <property type="entry name" value="MEDIATOR OF RNA POLYMERASE II TRANSCRIPTION SUBUNIT 8"/>
    <property type="match status" value="1"/>
</dbReference>
<dbReference type="Pfam" id="PF10232">
    <property type="entry name" value="Med8"/>
    <property type="match status" value="1"/>
</dbReference>
<accession>Q2UGT1</accession>
<gene>
    <name type="primary">med8</name>
    <name type="ORF">AO090023000723</name>
</gene>